<sequence>MESLSLIFISFITLIVFLVVSASKKRSHPSGYEPDIPKGGCPMLDSTAYLVLSSPTNTAVTSTGIITSNPENIEHVLKTNFANYPKGEHLTYGLYDLLGRGIFNSDGDHWKLQRKIASLEFNTRTIRHFVTHDVSREVLDRLLPSLSRAANSGEIIDLQEVLDRLAFDNVCKIAFDDDPARLADKKFNDGENDYYGKFAKAFGEAAEISTQRFEKSRWKIARALNLGTERKMKNALAIVNEFAMQVVREMKRKRAEEGKGRGSSADLLSLFISEGEFSDEFLRDVVISFVLAGRDTTSSTMAFFFWQVSTRPSICQKIKEEIVSVRKNHNNSQGGAFTLEELREMDYLHAVLSETLRLYPIVPLHARYTLADDVLPDGTMVKKGSTVMHSIYAMGRMESIWGADCLEFRPERWLENGVFRPKSPFLFPVFLAGPRMCLGKETAYMQMKAVAASVMEKFKIEVADGKHESEREYYLEIVLRLKGGLPVRVTEKEWSDNSAVNV</sequence>
<accession>A0A517FND0</accession>
<feature type="chain" id="PRO_5021937621" description="Cytochrome P450 CYP94D109">
    <location>
        <begin position="1"/>
        <end position="502"/>
    </location>
</feature>
<feature type="transmembrane region" description="Helical" evidence="2">
    <location>
        <begin position="3"/>
        <end position="23"/>
    </location>
</feature>
<feature type="binding site" description="axial binding residue" evidence="1">
    <location>
        <position position="437"/>
    </location>
    <ligand>
        <name>heme</name>
        <dbReference type="ChEBI" id="CHEBI:30413"/>
    </ligand>
    <ligandPart>
        <name>Fe</name>
        <dbReference type="ChEBI" id="CHEBI:18248"/>
    </ligandPart>
</feature>
<protein>
    <recommendedName>
        <fullName evidence="4">Cytochrome P450 CYP94D109</fullName>
        <shortName evidence="4">PpCYP94D109</shortName>
        <ecNumber evidence="3">1.14.14.-</ecNumber>
    </recommendedName>
</protein>
<name>94D19_PARPY</name>
<gene>
    <name evidence="4" type="primary">CYP94D109</name>
</gene>
<dbReference type="EC" id="1.14.14.-" evidence="3"/>
<dbReference type="EMBL" id="MK636704">
    <property type="protein sequence ID" value="QDS03630.1"/>
    <property type="molecule type" value="mRNA"/>
</dbReference>
<dbReference type="SMR" id="A0A517FND0"/>
<dbReference type="UniPathway" id="UPA00296"/>
<dbReference type="GO" id="GO:0016020">
    <property type="term" value="C:membrane"/>
    <property type="evidence" value="ECO:0007669"/>
    <property type="project" value="UniProtKB-SubCell"/>
</dbReference>
<dbReference type="GO" id="GO:0020037">
    <property type="term" value="F:heme binding"/>
    <property type="evidence" value="ECO:0007669"/>
    <property type="project" value="InterPro"/>
</dbReference>
<dbReference type="GO" id="GO:0005506">
    <property type="term" value="F:iron ion binding"/>
    <property type="evidence" value="ECO:0007669"/>
    <property type="project" value="InterPro"/>
</dbReference>
<dbReference type="GO" id="GO:0004497">
    <property type="term" value="F:monooxygenase activity"/>
    <property type="evidence" value="ECO:0007669"/>
    <property type="project" value="InterPro"/>
</dbReference>
<dbReference type="GO" id="GO:0016705">
    <property type="term" value="F:oxidoreductase activity, acting on paired donors, with incorporation or reduction of molecular oxygen"/>
    <property type="evidence" value="ECO:0000314"/>
    <property type="project" value="UniProtKB"/>
</dbReference>
<dbReference type="GO" id="GO:0008203">
    <property type="term" value="P:cholesterol metabolic process"/>
    <property type="evidence" value="ECO:0000314"/>
    <property type="project" value="UniProtKB"/>
</dbReference>
<dbReference type="GO" id="GO:0016135">
    <property type="term" value="P:saponin biosynthetic process"/>
    <property type="evidence" value="ECO:0000314"/>
    <property type="project" value="UniProtKB"/>
</dbReference>
<dbReference type="GO" id="GO:0006694">
    <property type="term" value="P:steroid biosynthetic process"/>
    <property type="evidence" value="ECO:0000314"/>
    <property type="project" value="UniProtKB"/>
</dbReference>
<dbReference type="CDD" id="cd11064">
    <property type="entry name" value="CYP86A"/>
    <property type="match status" value="1"/>
</dbReference>
<dbReference type="Gene3D" id="1.10.630.10">
    <property type="entry name" value="Cytochrome P450"/>
    <property type="match status" value="1"/>
</dbReference>
<dbReference type="InterPro" id="IPR001128">
    <property type="entry name" value="Cyt_P450"/>
</dbReference>
<dbReference type="InterPro" id="IPR002403">
    <property type="entry name" value="Cyt_P450_E_grp-IV"/>
</dbReference>
<dbReference type="InterPro" id="IPR036396">
    <property type="entry name" value="Cyt_P450_sf"/>
</dbReference>
<dbReference type="PANTHER" id="PTHR24296">
    <property type="entry name" value="CYTOCHROME P450"/>
    <property type="match status" value="1"/>
</dbReference>
<dbReference type="Pfam" id="PF00067">
    <property type="entry name" value="p450"/>
    <property type="match status" value="1"/>
</dbReference>
<dbReference type="PRINTS" id="PR00465">
    <property type="entry name" value="EP450IV"/>
</dbReference>
<dbReference type="PRINTS" id="PR00385">
    <property type="entry name" value="P450"/>
</dbReference>
<dbReference type="SUPFAM" id="SSF48264">
    <property type="entry name" value="Cytochrome P450"/>
    <property type="match status" value="1"/>
</dbReference>
<comment type="function">
    <text evidence="3">Involved in the biosynthesis of spiroketal steroid and saponin natural products from cholesterol such as diosgenin and analogs (e.g. furostanol and spirostanol), plant defense compounds used as main precursors for the industrial production of steroid hormones (PubMed:31324795). During the 5,6-spiroketalization of cholesterol, may catalyze the 27-monohydroxylation of furostanol-type steroid to an intermediate product that undergoes a stereospecific formation of the terminal heterocycle to yield diosgenin (PubMed:31324795).</text>
</comment>
<comment type="pathway">
    <text evidence="3">Steroid metabolism; cholesterol metabolism.</text>
</comment>
<comment type="subcellular location">
    <subcellularLocation>
        <location evidence="2">Membrane</location>
        <topology evidence="2">Single-pass membrane protein</topology>
    </subcellularLocation>
</comment>
<comment type="tissue specificity">
    <text evidence="3">Mainly expressed in leaves and, at low levels, in roots, fruits and stems.</text>
</comment>
<comment type="similarity">
    <text evidence="5">Belongs to the cytochrome P450 family.</text>
</comment>
<evidence type="ECO:0000250" key="1">
    <source>
        <dbReference type="UniProtKB" id="P04798"/>
    </source>
</evidence>
<evidence type="ECO:0000255" key="2"/>
<evidence type="ECO:0000269" key="3">
    <source>
    </source>
</evidence>
<evidence type="ECO:0000303" key="4">
    <source>
    </source>
</evidence>
<evidence type="ECO:0000305" key="5"/>
<keyword id="KW-0153">Cholesterol metabolism</keyword>
<keyword id="KW-0408">Iron</keyword>
<keyword id="KW-0444">Lipid biosynthesis</keyword>
<keyword id="KW-0443">Lipid metabolism</keyword>
<keyword id="KW-0472">Membrane</keyword>
<keyword id="KW-0479">Metal-binding</keyword>
<keyword id="KW-0560">Oxidoreductase</keyword>
<keyword id="KW-0752">Steroid biosynthesis</keyword>
<keyword id="KW-0753">Steroid metabolism</keyword>
<keyword id="KW-1207">Sterol metabolism</keyword>
<keyword id="KW-0812">Transmembrane</keyword>
<keyword id="KW-1133">Transmembrane helix</keyword>
<proteinExistence type="evidence at protein level"/>
<organism>
    <name type="scientific">Paris polyphylla</name>
    <name type="common">Daiswa polyphylla</name>
    <dbReference type="NCBI Taxonomy" id="49666"/>
    <lineage>
        <taxon>Eukaryota</taxon>
        <taxon>Viridiplantae</taxon>
        <taxon>Streptophyta</taxon>
        <taxon>Embryophyta</taxon>
        <taxon>Tracheophyta</taxon>
        <taxon>Spermatophyta</taxon>
        <taxon>Magnoliopsida</taxon>
        <taxon>Liliopsida</taxon>
        <taxon>Liliales</taxon>
        <taxon>Melanthiaceae</taxon>
        <taxon>Paris</taxon>
    </lineage>
</organism>
<reference key="1">
    <citation type="journal article" date="2019" name="Nat. Commun.">
        <title>Repeated evolution of cytochrome P450-mediated spiroketal steroid biosynthesis in plants.</title>
        <authorList>
            <person name="Christ B."/>
            <person name="Xu C."/>
            <person name="Xu M."/>
            <person name="Li F.-S."/>
            <person name="Wada N."/>
            <person name="Mitchell A.J."/>
            <person name="Han X.-L."/>
            <person name="Wen M.-L."/>
            <person name="Fujita M."/>
            <person name="Weng J.-K."/>
        </authorList>
    </citation>
    <scope>NUCLEOTIDE SEQUENCE [MRNA]</scope>
    <scope>FUNCTION</scope>
    <scope>CATALYTIC ACTIVITY</scope>
    <scope>PATHWAY</scope>
    <scope>TISSUE SPECIFICITY</scope>
    <source>
        <tissue>Fruit</tissue>
        <tissue>Leaf</tissue>
        <tissue>Root</tissue>
        <tissue>Stem</tissue>
    </source>
</reference>